<sequence length="625" mass="67022">MMTPGKSSKTPIVGNLTTLGITIPDTVTSIGFKTFYGCSSFTSIIIPNSVTSIGTKAFTGCSSLTSITIGNSVTSFGQEAFSECSSITSITIPNSVTTIRDFAFSGCSKLTSITIPNSVTSLGSHAFRGCSGLTSIIIPDSVTLIRGSIFYGCSSLTSITIPNSVTSIYSSAFYGCSSLTSITIPDSVLDFGSAAFQECSKLTNIKIGNNVDSIGSLAFKRCSSLTNITIPDSVTTIANSAFYECSKLTSITIGKSVTRIEGNAFSKCYSLTSITIKTTNDITSSITTDVFLNCPITELIYETTGLTFLTYEYFKDKVTLIKFNIPKSDSNSMIRLQEITSLPTLTHFTNLNKVTIENINELTIPESFIEGDNFEILITNNIKSIDPNAFKDCSINKFTYLGTDKLENDFLKNAKSCEEVITSTKYSDNEIGGMTITHKQSEENPNQPGENPNQPGENPNQPGENPNQPGENPSQPGENPSQPGENPNQPGENPSQPGENPNQPGENPNQPGENPNQPGENPSQPGENTDDPSKSKENKAIKGGEIAGIIIGSLIGICLVVAICFGVYYYFMRIKPKNKNDDNEGNQEDTIANGTNEVTNENVLATFDEQPNNESDSNGLDSAEV</sequence>
<organism>
    <name type="scientific">Trichomonas vaginalis</name>
    <dbReference type="NCBI Taxonomy" id="5722"/>
    <lineage>
        <taxon>Eukaryota</taxon>
        <taxon>Metamonada</taxon>
        <taxon>Parabasalia</taxon>
        <taxon>Trichomonadida</taxon>
        <taxon>Trichomonadidae</taxon>
        <taxon>Trichomonas</taxon>
    </lineage>
</organism>
<protein>
    <recommendedName>
        <fullName>Putative surface protein bspA-like</fullName>
    </recommendedName>
    <alternativeName>
        <fullName>TvBspA-like-625</fullName>
    </alternativeName>
</protein>
<name>BSL1_TRIVA</name>
<proteinExistence type="predicted"/>
<evidence type="ECO:0000255" key="1"/>
<evidence type="ECO:0000256" key="2">
    <source>
        <dbReference type="SAM" id="MobiDB-lite"/>
    </source>
</evidence>
<evidence type="ECO:0000305" key="3"/>
<comment type="function">
    <text>May bind host tissue.</text>
</comment>
<comment type="subcellular location">
    <subcellularLocation>
        <location evidence="3">Cell membrane</location>
        <topology evidence="3">Single-pass membrane protein</topology>
    </subcellularLocation>
    <text evidence="3">Surface membrane.</text>
</comment>
<dbReference type="EMBL" id="AY101349">
    <property type="protein sequence ID" value="AAM51159.1"/>
    <property type="molecule type" value="Genomic_DNA"/>
</dbReference>
<dbReference type="SMR" id="Q8MTI2"/>
<dbReference type="GlyCosmos" id="Q8MTI2">
    <property type="glycosylation" value="2 sites, No reported glycans"/>
</dbReference>
<dbReference type="VEuPathDB" id="TrichDB:TVAG_073760"/>
<dbReference type="VEuPathDB" id="TrichDB:TVAGG3_0797730"/>
<dbReference type="GO" id="GO:0005886">
    <property type="term" value="C:plasma membrane"/>
    <property type="evidence" value="ECO:0007669"/>
    <property type="project" value="UniProtKB-SubCell"/>
</dbReference>
<dbReference type="Gene3D" id="3.80.10.10">
    <property type="entry name" value="Ribonuclease Inhibitor"/>
    <property type="match status" value="2"/>
</dbReference>
<dbReference type="InterPro" id="IPR026906">
    <property type="entry name" value="LRR_5"/>
</dbReference>
<dbReference type="InterPro" id="IPR032675">
    <property type="entry name" value="LRR_dom_sf"/>
</dbReference>
<dbReference type="InterPro" id="IPR053139">
    <property type="entry name" value="Surface_bspA-like"/>
</dbReference>
<dbReference type="PANTHER" id="PTHR45661:SF3">
    <property type="entry name" value="IG-LIKE DOMAIN-CONTAINING PROTEIN"/>
    <property type="match status" value="1"/>
</dbReference>
<dbReference type="PANTHER" id="PTHR45661">
    <property type="entry name" value="SURFACE ANTIGEN"/>
    <property type="match status" value="1"/>
</dbReference>
<dbReference type="Pfam" id="PF13306">
    <property type="entry name" value="LRR_5"/>
    <property type="match status" value="2"/>
</dbReference>
<dbReference type="SUPFAM" id="SSF52058">
    <property type="entry name" value="L domain-like"/>
    <property type="match status" value="1"/>
</dbReference>
<gene>
    <name type="primary">BSPAL1</name>
</gene>
<reference key="1">
    <citation type="journal article" date="2002" name="Mol. Biochem. Parasitol.">
        <title>A novel potential surface protein in Trichomonas vaginalis contains a leucine-rich repeat shared by micro-organisms from all three domains of life.</title>
        <authorList>
            <person name="Hirt R.P."/>
            <person name="Harriman N."/>
            <person name="Kajava A.V."/>
            <person name="Embley T.M."/>
        </authorList>
    </citation>
    <scope>NUCLEOTIDE SEQUENCE [GENOMIC DNA]</scope>
</reference>
<keyword id="KW-1003">Cell membrane</keyword>
<keyword id="KW-0325">Glycoprotein</keyword>
<keyword id="KW-0433">Leucine-rich repeat</keyword>
<keyword id="KW-0472">Membrane</keyword>
<keyword id="KW-0677">Repeat</keyword>
<keyword id="KW-0812">Transmembrane</keyword>
<keyword id="KW-1133">Transmembrane helix</keyword>
<accession>Q8MTI2</accession>
<feature type="chain" id="PRO_0000064998" description="Putative surface protein bspA-like">
    <location>
        <begin position="1"/>
        <end position="625"/>
    </location>
</feature>
<feature type="topological domain" description="Extracellular" evidence="1">
    <location>
        <begin position="1"/>
        <end position="548"/>
    </location>
</feature>
<feature type="transmembrane region" description="Helical" evidence="1">
    <location>
        <begin position="549"/>
        <end position="571"/>
    </location>
</feature>
<feature type="topological domain" description="Cytoplasmic" evidence="1">
    <location>
        <begin position="572"/>
        <end position="625"/>
    </location>
</feature>
<feature type="repeat" description="LRR 1">
    <location>
        <begin position="38"/>
        <end position="60"/>
    </location>
</feature>
<feature type="repeat" description="LRR 2">
    <location>
        <begin position="61"/>
        <end position="83"/>
    </location>
</feature>
<feature type="repeat" description="LRR 3">
    <location>
        <begin position="85"/>
        <end position="106"/>
    </location>
</feature>
<feature type="repeat" description="LRR 4">
    <location>
        <begin position="107"/>
        <end position="129"/>
    </location>
</feature>
<feature type="repeat" description="LRR 5">
    <location>
        <begin position="153"/>
        <end position="175"/>
    </location>
</feature>
<feature type="repeat" description="LRR 6">
    <location>
        <begin position="176"/>
        <end position="198"/>
    </location>
</feature>
<feature type="repeat" description="LRR 7">
    <location>
        <begin position="200"/>
        <end position="221"/>
    </location>
</feature>
<feature type="repeat" description="LRR 8">
    <location>
        <begin position="222"/>
        <end position="245"/>
    </location>
</feature>
<feature type="repeat" description="LRR 9">
    <location>
        <begin position="247"/>
        <end position="267"/>
    </location>
</feature>
<feature type="repeat" description="LRR 10">
    <location>
        <begin position="271"/>
        <end position="293"/>
    </location>
</feature>
<feature type="repeat" description="LRR 11">
    <location>
        <begin position="325"/>
        <end position="347"/>
    </location>
</feature>
<feature type="repeat" description="LRR 12">
    <location>
        <begin position="348"/>
        <end position="368"/>
    </location>
</feature>
<feature type="repeat" description="LRR 13">
    <location>
        <begin position="369"/>
        <end position="392"/>
    </location>
</feature>
<feature type="region of interest" description="Disordered" evidence="2">
    <location>
        <begin position="439"/>
        <end position="538"/>
    </location>
</feature>
<feature type="region of interest" description="Disordered" evidence="2">
    <location>
        <begin position="577"/>
        <end position="625"/>
    </location>
</feature>
<feature type="compositionally biased region" description="Low complexity" evidence="2">
    <location>
        <begin position="443"/>
        <end position="526"/>
    </location>
</feature>
<feature type="compositionally biased region" description="Polar residues" evidence="2">
    <location>
        <begin position="588"/>
        <end position="625"/>
    </location>
</feature>
<feature type="glycosylation site" description="N-linked (GlcNAc...) asparagine" evidence="1">
    <location>
        <position position="15"/>
    </location>
</feature>
<feature type="glycosylation site" description="N-linked (GlcNAc...) asparagine" evidence="1">
    <location>
        <position position="227"/>
    </location>
</feature>